<proteinExistence type="evidence at protein level"/>
<feature type="chain" id="PRO_0000288461" description="BRISC and BRCA1-A complex member 1">
    <location>
        <begin position="1"/>
        <end position="334"/>
    </location>
</feature>
<feature type="region of interest" description="Disordered" evidence="2">
    <location>
        <begin position="1"/>
        <end position="79"/>
    </location>
</feature>
<feature type="region of interest" description="VWFA-like">
    <location>
        <begin position="100"/>
        <end position="303"/>
    </location>
</feature>
<feature type="compositionally biased region" description="Acidic residues" evidence="2">
    <location>
        <begin position="10"/>
        <end position="25"/>
    </location>
</feature>
<feature type="compositionally biased region" description="Low complexity" evidence="2">
    <location>
        <begin position="59"/>
        <end position="68"/>
    </location>
</feature>
<feature type="modified residue" description="N-acetylmethionine" evidence="1">
    <location>
        <position position="1"/>
    </location>
</feature>
<feature type="modified residue" description="Phosphoserine" evidence="4">
    <location>
        <position position="8"/>
    </location>
</feature>
<feature type="modified residue" description="Phosphoserine" evidence="1">
    <location>
        <position position="34"/>
    </location>
</feature>
<feature type="modified residue" description="Phosphoserine" evidence="4">
    <location>
        <position position="54"/>
    </location>
</feature>
<accession>Q5XIJ6</accession>
<sequence length="334" mass="36878">MEVAEANSPTEEEEEEEEEEGEEPISEPRPHTRSNPEGAEDRAIGAQANVGSRSEGEGEAATADDGAASVPGAVPKPWQVPAPASEVQIRTPRVNCPEKVIICLDLSEEMSVPKLESFNGSRTNALNVSQKMVEMFVRTKHKIDKSHEFALVVVNDDSAWLSGLTSDPRELCSCLYDLETASCSTFNLEGLFSLIQQKTELPVTENVQTIPPPYVVRTILVYSRPPCQPQFSLTEPMKKMFQCPYFFFDIIYIHSGPEEKEDDMSWKDMFAFMGSLDTKGTSYKYAVALAGPALELHNCVAKLLAHPLQRPCQSHASYSLLEEDEEAGEGEATV</sequence>
<evidence type="ECO:0000250" key="1">
    <source>
        <dbReference type="UniProtKB" id="Q9NWV8"/>
    </source>
</evidence>
<evidence type="ECO:0000256" key="2">
    <source>
        <dbReference type="SAM" id="MobiDB-lite"/>
    </source>
</evidence>
<evidence type="ECO:0000305" key="3"/>
<evidence type="ECO:0007744" key="4">
    <source>
    </source>
</evidence>
<gene>
    <name type="primary">Babam1</name>
    <name type="synonym">Merit40</name>
    <name type="synonym">Nba1</name>
</gene>
<name>BABA1_RAT</name>
<dbReference type="EMBL" id="BC083685">
    <property type="protein sequence ID" value="AAH83685.1"/>
    <property type="molecule type" value="mRNA"/>
</dbReference>
<dbReference type="RefSeq" id="NP_001006965.1">
    <property type="nucleotide sequence ID" value="NM_001006964.1"/>
</dbReference>
<dbReference type="RefSeq" id="XP_006252919.1">
    <property type="nucleotide sequence ID" value="XM_006252857.3"/>
</dbReference>
<dbReference type="SMR" id="Q5XIJ6"/>
<dbReference type="BioGRID" id="253253">
    <property type="interactions" value="2"/>
</dbReference>
<dbReference type="FunCoup" id="Q5XIJ6">
    <property type="interactions" value="2772"/>
</dbReference>
<dbReference type="STRING" id="10116.ENSRNOP00000022938"/>
<dbReference type="iPTMnet" id="Q5XIJ6"/>
<dbReference type="PhosphoSitePlus" id="Q5XIJ6"/>
<dbReference type="jPOST" id="Q5XIJ6"/>
<dbReference type="PaxDb" id="10116-ENSRNOP00000022938"/>
<dbReference type="Ensembl" id="ENSRNOT00000022938.6">
    <property type="protein sequence ID" value="ENSRNOP00000022938.3"/>
    <property type="gene ID" value="ENSRNOG00000017071.6"/>
</dbReference>
<dbReference type="GeneID" id="290631"/>
<dbReference type="KEGG" id="rno:290631"/>
<dbReference type="UCSC" id="RGD:1359516">
    <property type="organism name" value="rat"/>
</dbReference>
<dbReference type="AGR" id="RGD:1359516"/>
<dbReference type="CTD" id="29086"/>
<dbReference type="RGD" id="1359516">
    <property type="gene designation" value="Babam1"/>
</dbReference>
<dbReference type="eggNOG" id="ENOG502QPZP">
    <property type="taxonomic scope" value="Eukaryota"/>
</dbReference>
<dbReference type="GeneTree" id="ENSGT00390000016934"/>
<dbReference type="HOGENOM" id="CLU_077295_0_0_1"/>
<dbReference type="InParanoid" id="Q5XIJ6"/>
<dbReference type="OMA" id="SCTTAWP"/>
<dbReference type="OrthoDB" id="62432at9989"/>
<dbReference type="PhylomeDB" id="Q5XIJ6"/>
<dbReference type="TreeFam" id="TF329070"/>
<dbReference type="Reactome" id="R-RNO-5689901">
    <property type="pathway name" value="Metalloprotease DUBs"/>
</dbReference>
<dbReference type="Reactome" id="R-RNO-5693565">
    <property type="pathway name" value="Recruitment and ATM-mediated phosphorylation of repair and signaling proteins at DNA double strand breaks"/>
</dbReference>
<dbReference type="Reactome" id="R-RNO-5693571">
    <property type="pathway name" value="Nonhomologous End-Joining (NHEJ)"/>
</dbReference>
<dbReference type="Reactome" id="R-RNO-5693607">
    <property type="pathway name" value="Processing of DNA double-strand break ends"/>
</dbReference>
<dbReference type="Reactome" id="R-RNO-69473">
    <property type="pathway name" value="G2/M DNA damage checkpoint"/>
</dbReference>
<dbReference type="PRO" id="PR:Q5XIJ6"/>
<dbReference type="Proteomes" id="UP000002494">
    <property type="component" value="Chromosome 16"/>
</dbReference>
<dbReference type="Bgee" id="ENSRNOG00000017071">
    <property type="expression patterns" value="Expressed in skeletal muscle tissue and 20 other cell types or tissues"/>
</dbReference>
<dbReference type="GO" id="GO:0070531">
    <property type="term" value="C:BRCA1-A complex"/>
    <property type="evidence" value="ECO:0000250"/>
    <property type="project" value="UniProtKB"/>
</dbReference>
<dbReference type="GO" id="GO:0070552">
    <property type="term" value="C:BRISC complex"/>
    <property type="evidence" value="ECO:0000250"/>
    <property type="project" value="UniProtKB"/>
</dbReference>
<dbReference type="GO" id="GO:0005737">
    <property type="term" value="C:cytoplasm"/>
    <property type="evidence" value="ECO:0000250"/>
    <property type="project" value="UniProtKB"/>
</dbReference>
<dbReference type="GO" id="GO:0016604">
    <property type="term" value="C:nuclear body"/>
    <property type="evidence" value="ECO:0000318"/>
    <property type="project" value="GO_Central"/>
</dbReference>
<dbReference type="GO" id="GO:0005634">
    <property type="term" value="C:nucleus"/>
    <property type="evidence" value="ECO:0000250"/>
    <property type="project" value="UniProtKB"/>
</dbReference>
<dbReference type="GO" id="GO:0042802">
    <property type="term" value="F:identical protein binding"/>
    <property type="evidence" value="ECO:0000266"/>
    <property type="project" value="RGD"/>
</dbReference>
<dbReference type="GO" id="GO:0051301">
    <property type="term" value="P:cell division"/>
    <property type="evidence" value="ECO:0007669"/>
    <property type="project" value="UniProtKB-KW"/>
</dbReference>
<dbReference type="GO" id="GO:0140861">
    <property type="term" value="P:DNA repair-dependent chromatin remodeling"/>
    <property type="evidence" value="ECO:0000250"/>
    <property type="project" value="UniProtKB"/>
</dbReference>
<dbReference type="GO" id="GO:0006302">
    <property type="term" value="P:double-strand break repair"/>
    <property type="evidence" value="ECO:0000250"/>
    <property type="project" value="UniProtKB"/>
</dbReference>
<dbReference type="GO" id="GO:0071425">
    <property type="term" value="P:hematopoietic stem cell proliferation"/>
    <property type="evidence" value="ECO:0000266"/>
    <property type="project" value="RGD"/>
</dbReference>
<dbReference type="GO" id="GO:0007095">
    <property type="term" value="P:mitotic G2 DNA damage checkpoint signaling"/>
    <property type="evidence" value="ECO:0000250"/>
    <property type="project" value="UniProtKB"/>
</dbReference>
<dbReference type="GO" id="GO:0045739">
    <property type="term" value="P:positive regulation of DNA repair"/>
    <property type="evidence" value="ECO:0000250"/>
    <property type="project" value="UniProtKB"/>
</dbReference>
<dbReference type="GO" id="GO:0010212">
    <property type="term" value="P:response to ionizing radiation"/>
    <property type="evidence" value="ECO:0000250"/>
    <property type="project" value="UniProtKB"/>
</dbReference>
<dbReference type="CDD" id="cd21502">
    <property type="entry name" value="vWA_BABAM1"/>
    <property type="match status" value="1"/>
</dbReference>
<dbReference type="Gene3D" id="3.40.50.410">
    <property type="entry name" value="von Willebrand factor, type A domain"/>
    <property type="match status" value="1"/>
</dbReference>
<dbReference type="InterPro" id="IPR026126">
    <property type="entry name" value="BABAM1"/>
</dbReference>
<dbReference type="InterPro" id="IPR036465">
    <property type="entry name" value="vWFA_dom_sf"/>
</dbReference>
<dbReference type="PANTHER" id="PTHR15660">
    <property type="entry name" value="BRISC AND BRCA1-A COMPLEX MEMBER 1"/>
    <property type="match status" value="1"/>
</dbReference>
<dbReference type="PANTHER" id="PTHR15660:SF1">
    <property type="entry name" value="BRISC AND BRCA1-A COMPLEX MEMBER 1"/>
    <property type="match status" value="1"/>
</dbReference>
<dbReference type="SUPFAM" id="SSF53300">
    <property type="entry name" value="vWA-like"/>
    <property type="match status" value="1"/>
</dbReference>
<protein>
    <recommendedName>
        <fullName>BRISC and BRCA1-A complex member 1</fullName>
    </recommendedName>
    <alternativeName>
        <fullName>Mediator of RAP80 interactions and targeting subunit of 40 kDa</fullName>
    </alternativeName>
    <alternativeName>
        <fullName>New component of the BRCA1-A complex</fullName>
    </alternativeName>
</protein>
<organism>
    <name type="scientific">Rattus norvegicus</name>
    <name type="common">Rat</name>
    <dbReference type="NCBI Taxonomy" id="10116"/>
    <lineage>
        <taxon>Eukaryota</taxon>
        <taxon>Metazoa</taxon>
        <taxon>Chordata</taxon>
        <taxon>Craniata</taxon>
        <taxon>Vertebrata</taxon>
        <taxon>Euteleostomi</taxon>
        <taxon>Mammalia</taxon>
        <taxon>Eutheria</taxon>
        <taxon>Euarchontoglires</taxon>
        <taxon>Glires</taxon>
        <taxon>Rodentia</taxon>
        <taxon>Myomorpha</taxon>
        <taxon>Muroidea</taxon>
        <taxon>Muridae</taxon>
        <taxon>Murinae</taxon>
        <taxon>Rattus</taxon>
    </lineage>
</organism>
<comment type="function">
    <text evidence="1">Component of the BRCA1-A complex, a complex that specifically recognizes 'Lys-63'-linked ubiquitinated histones H2A and H2AX at DNA lesions sites, leading to target the BRCA1-BARD1 heterodimer to sites of DNA damage at double-strand breaks (DSBs). The BRCA1-A complex also possesses deubiquitinase activity that specifically removes 'Lys-63'-linked ubiquitin on histones H2A and H2AX. In the BRCA1-A complex, it is required for the complex integrity and its localization at DSBs. Component of the BRISC complex, a multiprotein complex that specifically cleaves 'Lys-63'-linked ubiquitin in various substrates. In these 2 complexes, it is probably required to maintain the stability of BABAM2 and help the 'Lys-63'-linked deubiquitinase activity mediated by BRCC3/BRCC36 component. The BRISC complex is required for normal mitotic spindle assembly and microtubule attachment to kinetochores via its role in deubiquitinating NUMA1. Plays a role in interferon signaling via its role in the deubiquitination of the interferon receptor IFNAR1; deubiquitination increases IFNAR1 activity by enhancing its stability and cell surface expression. Down-regulates the response to bacterial lipopolysaccharide (LPS) via its role in IFNAR1 deubiquitination.</text>
</comment>
<comment type="subunit">
    <text evidence="1">Component of the ARISC complex, at least composed of UIMC1/RAP80, ABRAXAS1, BRCC3/BRCC36, BABAM2 and BABAM1/NBA1. Component of the BRCA1-A complex, at least composed of BRCA1, BARD1, UIMC1/RAP80, ABRAXAS1, BRCC3/BRCC36, BABAM2 and BABAM1/NBA1. In the BRCA1-A complex, interacts directly with ABRAXAS1 and BABAM2. Component of the BRISC complex, at least composed of ABRAXAS2, BRCC3/BRCC36, BABAM2 and BABAM1/NBA1. Identified in a complex with SHMT2 and the other subunits of the BRISC complex.</text>
</comment>
<comment type="subcellular location">
    <subcellularLocation>
        <location evidence="1">Cytoplasm</location>
    </subcellularLocation>
    <subcellularLocation>
        <location evidence="1">Nucleus</location>
    </subcellularLocation>
    <text evidence="1">Localizes at sites of DNA damage at double-strand breaks (DSBs).</text>
</comment>
<comment type="domain">
    <text evidence="1">The VWFA-like region is similar to the VWFA domain. Its presence reveals similarities between the structure of the 19S proteasome and the BRCA1-A complexes.</text>
</comment>
<comment type="similarity">
    <text evidence="3">Belongs to the BABAM1 family.</text>
</comment>
<reference key="1">
    <citation type="journal article" date="2004" name="Genome Res.">
        <title>The status, quality, and expansion of the NIH full-length cDNA project: the Mammalian Gene Collection (MGC).</title>
        <authorList>
            <consortium name="The MGC Project Team"/>
        </authorList>
    </citation>
    <scope>NUCLEOTIDE SEQUENCE [LARGE SCALE MRNA]</scope>
    <source>
        <tissue>Heart</tissue>
    </source>
</reference>
<reference key="2">
    <citation type="journal article" date="2012" name="Nat. Commun.">
        <title>Quantitative maps of protein phosphorylation sites across 14 different rat organs and tissues.</title>
        <authorList>
            <person name="Lundby A."/>
            <person name="Secher A."/>
            <person name="Lage K."/>
            <person name="Nordsborg N.B."/>
            <person name="Dmytriyev A."/>
            <person name="Lundby C."/>
            <person name="Olsen J.V."/>
        </authorList>
    </citation>
    <scope>PHOSPHORYLATION [LARGE SCALE ANALYSIS] AT SER-8 AND SER-54</scope>
    <scope>IDENTIFICATION BY MASS SPECTROMETRY [LARGE SCALE ANALYSIS]</scope>
</reference>
<keyword id="KW-0007">Acetylation</keyword>
<keyword id="KW-0131">Cell cycle</keyword>
<keyword id="KW-0132">Cell division</keyword>
<keyword id="KW-0156">Chromatin regulator</keyword>
<keyword id="KW-0963">Cytoplasm</keyword>
<keyword id="KW-0227">DNA damage</keyword>
<keyword id="KW-0234">DNA repair</keyword>
<keyword id="KW-0498">Mitosis</keyword>
<keyword id="KW-0539">Nucleus</keyword>
<keyword id="KW-0597">Phosphoprotein</keyword>
<keyword id="KW-1185">Reference proteome</keyword>
<keyword id="KW-0833">Ubl conjugation pathway</keyword>